<gene>
    <name evidence="2" type="primary">saeC</name>
    <name type="ordered locus">MSMEG_0046</name>
    <name type="ordered locus">MSMEI_0048</name>
</gene>
<comment type="function">
    <text>May be involved in assembly of the ESX-1 / type VII specialized secretion system (T7SS), which exports several proteins including EsxA and EsxB (PubMed:22233444). Involved in DNA conjugation in recipient (MKD8) strain (PubMed:22233444).</text>
</comment>
<comment type="subcellular location">
    <subcellularLocation>
        <location evidence="1">Cytoplasm</location>
    </subcellularLocation>
    <text evidence="1">Localizes at or near the cell pole (usually the old or non-septal cell pole) in (on average) 1 discrete spot that also colocalizes with EspE and EccCb1 (PubMed:22233444). Localization occurs in the absence of the ESX-1 locus (PubMed:22233444).</text>
</comment>
<comment type="disruption phenotype">
    <text evidence="1">Secretes greatly reduced amounts of EsxB, protein is synthesized intracellularly (PubMed:22233444). In single deletion mutant EccCb1 only rarely localizes near the cell pole, while disruption of the probable saeA-saeB-saeC operon completely blocks polar localization of EccCb1 (PubMed:22233444). Loss of DNA conjugation when disrupted in recipient strain (MKD8) (PubMed:22233444).</text>
</comment>
<comment type="miscellaneous">
    <text evidence="3">DNA conjugation in M.smegmatis is unidirectional with distinct donor and recipient strains; mc(2)155 is a donor strain while MKD8 is a recipient strain. Mutations in a donor strain that alter DNA transfer do not always alter DNA transfer in a recipient strain.</text>
</comment>
<protein>
    <recommendedName>
        <fullName>Putative ESX-1 scaffolding and assembly protein SaeC</fullName>
    </recommendedName>
</protein>
<sequence length="385" mass="42111">MSKCPRCFTALNPNQYLWTLPEQSGGTRYRDEVATAYSGAPADCGPLYTWSRSPGYNGPPPPTSEATRALQAPAVEICPVCHFTLPEGWREGHAICIALAGARATGKSLYIAVLVKQLELLCERFGVSMQPVTRGTAQAYATNYETPLYVQRGLIPPTPTVRTQTSDHREPLMFSLGIWHGVRRFLVLRDVAGEDMESGDLHAPPFRFFAHADAVFFMFDPLRVKTIRDQLHDLLPAQVVSGGDPRTVLTNVLTAVSPGQPKLAVILSKFDVLRALRDVEGSEWGLIMSNGGAAYLRDTSDGQQYDETDGQLLHEEVRSLLLRLHGGSILAAVENPATGVRLQSRNFVVSALGHPPSGNRLHARGIAPFRCVDPIRWVTSGFGVL</sequence>
<feature type="chain" id="PRO_0000438355" description="Putative ESX-1 scaffolding and assembly protein SaeC">
    <location>
        <begin position="1"/>
        <end position="385"/>
    </location>
</feature>
<name>SAEC_MYCS2</name>
<dbReference type="EMBL" id="CP000480">
    <property type="protein sequence ID" value="ABK70450.1"/>
    <property type="molecule type" value="Genomic_DNA"/>
</dbReference>
<dbReference type="EMBL" id="CP001663">
    <property type="protein sequence ID" value="AFP36530.1"/>
    <property type="molecule type" value="Genomic_DNA"/>
</dbReference>
<dbReference type="RefSeq" id="WP_003891374.1">
    <property type="nucleotide sequence ID" value="NZ_SIJM01000001.1"/>
</dbReference>
<dbReference type="RefSeq" id="YP_884464.1">
    <property type="nucleotide sequence ID" value="NC_008596.1"/>
</dbReference>
<dbReference type="STRING" id="246196.MSMEG_0046"/>
<dbReference type="PaxDb" id="246196-MSMEI_0048"/>
<dbReference type="KEGG" id="msb:LJ00_00230"/>
<dbReference type="KEGG" id="msg:MSMEI_0048"/>
<dbReference type="KEGG" id="msm:MSMEG_0046"/>
<dbReference type="PATRIC" id="fig|246196.19.peg.44"/>
<dbReference type="eggNOG" id="COG1100">
    <property type="taxonomic scope" value="Bacteria"/>
</dbReference>
<dbReference type="OrthoDB" id="143162at2"/>
<dbReference type="Proteomes" id="UP000000757">
    <property type="component" value="Chromosome"/>
</dbReference>
<dbReference type="Proteomes" id="UP000006158">
    <property type="component" value="Chromosome"/>
</dbReference>
<dbReference type="GO" id="GO:0005737">
    <property type="term" value="C:cytoplasm"/>
    <property type="evidence" value="ECO:0007669"/>
    <property type="project" value="UniProtKB-SubCell"/>
</dbReference>
<accession>A0QNH6</accession>
<organism>
    <name type="scientific">Mycolicibacterium smegmatis (strain ATCC 700084 / mc(2)155)</name>
    <name type="common">Mycobacterium smegmatis</name>
    <dbReference type="NCBI Taxonomy" id="246196"/>
    <lineage>
        <taxon>Bacteria</taxon>
        <taxon>Bacillati</taxon>
        <taxon>Actinomycetota</taxon>
        <taxon>Actinomycetes</taxon>
        <taxon>Mycobacteriales</taxon>
        <taxon>Mycobacteriaceae</taxon>
        <taxon>Mycolicibacterium</taxon>
    </lineage>
</organism>
<keyword id="KW-0963">Cytoplasm</keyword>
<keyword id="KW-1185">Reference proteome</keyword>
<evidence type="ECO:0000269" key="1">
    <source>
    </source>
</evidence>
<evidence type="ECO:0000303" key="2">
    <source>
    </source>
</evidence>
<evidence type="ECO:0000305" key="3">
    <source>
    </source>
</evidence>
<reference key="1">
    <citation type="submission" date="2006-10" db="EMBL/GenBank/DDBJ databases">
        <authorList>
            <person name="Fleischmann R.D."/>
            <person name="Dodson R.J."/>
            <person name="Haft D.H."/>
            <person name="Merkel J.S."/>
            <person name="Nelson W.C."/>
            <person name="Fraser C.M."/>
        </authorList>
    </citation>
    <scope>NUCLEOTIDE SEQUENCE [LARGE SCALE GENOMIC DNA]</scope>
    <source>
        <strain>ATCC 700084 / mc(2)155</strain>
    </source>
</reference>
<reference key="2">
    <citation type="journal article" date="2007" name="Genome Biol.">
        <title>Interrupted coding sequences in Mycobacterium smegmatis: authentic mutations or sequencing errors?</title>
        <authorList>
            <person name="Deshayes C."/>
            <person name="Perrodou E."/>
            <person name="Gallien S."/>
            <person name="Euphrasie D."/>
            <person name="Schaeffer C."/>
            <person name="Van-Dorsselaer A."/>
            <person name="Poch O."/>
            <person name="Lecompte O."/>
            <person name="Reyrat J.-M."/>
        </authorList>
    </citation>
    <scope>NUCLEOTIDE SEQUENCE [LARGE SCALE GENOMIC DNA]</scope>
    <source>
        <strain>ATCC 700084 / mc(2)155</strain>
    </source>
</reference>
<reference key="3">
    <citation type="journal article" date="2009" name="Genome Res.">
        <title>Ortho-proteogenomics: multiple proteomes investigation through orthology and a new MS-based protocol.</title>
        <authorList>
            <person name="Gallien S."/>
            <person name="Perrodou E."/>
            <person name="Carapito C."/>
            <person name="Deshayes C."/>
            <person name="Reyrat J.-M."/>
            <person name="Van Dorsselaer A."/>
            <person name="Poch O."/>
            <person name="Schaeffer C."/>
            <person name="Lecompte O."/>
        </authorList>
    </citation>
    <scope>NUCLEOTIDE SEQUENCE [LARGE SCALE GENOMIC DNA]</scope>
    <source>
        <strain>ATCC 700084 / mc(2)155</strain>
    </source>
</reference>
<reference key="4">
    <citation type="journal article" date="2012" name="Mol. Microbiol.">
        <title>Polar assembly and scaffolding proteins of the virulence-associated ESX-1 secretory apparatus in mycobacteria.</title>
        <authorList>
            <person name="Wirth S.E."/>
            <person name="Krywy J.A."/>
            <person name="Aldridge B.B."/>
            <person name="Fortune S.M."/>
            <person name="Fernandez-Suarez M."/>
            <person name="Gray T.A."/>
            <person name="Derbyshire K.M."/>
        </authorList>
    </citation>
    <scope>FUNCTION</scope>
    <scope>SUBCELLULAR LOCATION</scope>
    <scope>DISRUPTION PHENOTYPE</scope>
    <source>
        <strain>ATCC 700084 / mc(2)155</strain>
    </source>
</reference>
<proteinExistence type="predicted"/>